<protein>
    <recommendedName>
        <fullName evidence="5">C2H2-type zinc-finger transcription factor</fullName>
    </recommendedName>
    <alternativeName>
        <fullName evidence="6">Fellutamide B biosynthesis cluster protein F</fullName>
    </alternativeName>
    <alternativeName>
        <fullName evidence="6">Inp $cluster regulator scpR</fullName>
    </alternativeName>
    <alternativeName>
        <fullName evidence="5">Secondary metabolism cross-pathway regulator</fullName>
    </alternativeName>
</protein>
<name>SCPR_EMENI</name>
<sequence length="277" mass="30569">MNTMNNMHLYADSLGIHPADHYPTMNEIETTDNTYPRYTSPPHPSILHHPQAPEPAPPRAQTAHPPAWALTSQSGYQMNEPSLSLTPEHRPAAGPPNGPNLNHDSDPRRPARRQQPCGVGTTRPLPGCPGQGQEPSRRRTTFTDSISNPDSTIRCWDHGCEGRKFSSVGNYRRHLREKNGQAKMHPCPDCGRVFTRSTARNFHRQSGTCGLIPSQLMLQMGMGMQLQVQMQPVSQHSLASGHPPAFNLAPPVLLEPLADWSEPSQMDLYAASGVVFD</sequence>
<gene>
    <name evidence="5" type="primary">scpR</name>
    <name type="ORF">AN3492</name>
</gene>
<organism>
    <name type="scientific">Emericella nidulans (strain FGSC A4 / ATCC 38163 / CBS 112.46 / NRRL 194 / M139)</name>
    <name type="common">Aspergillus nidulans</name>
    <dbReference type="NCBI Taxonomy" id="227321"/>
    <lineage>
        <taxon>Eukaryota</taxon>
        <taxon>Fungi</taxon>
        <taxon>Dikarya</taxon>
        <taxon>Ascomycota</taxon>
        <taxon>Pezizomycotina</taxon>
        <taxon>Eurotiomycetes</taxon>
        <taxon>Eurotiomycetidae</taxon>
        <taxon>Eurotiales</taxon>
        <taxon>Aspergillaceae</taxon>
        <taxon>Aspergillus</taxon>
        <taxon>Aspergillus subgen. Nidulantes</taxon>
    </lineage>
</organism>
<keyword id="KW-0479">Metal-binding</keyword>
<keyword id="KW-0539">Nucleus</keyword>
<keyword id="KW-1185">Reference proteome</keyword>
<keyword id="KW-0810">Translation regulation</keyword>
<keyword id="KW-0862">Zinc</keyword>
<keyword id="KW-0863">Zinc-finger</keyword>
<dbReference type="EMBL" id="BN001302">
    <property type="protein sequence ID" value="CBF76044.1"/>
    <property type="molecule type" value="Genomic_DNA"/>
</dbReference>
<dbReference type="EMBL" id="AACD01000059">
    <property type="protein sequence ID" value="EAA59053.1"/>
    <property type="molecule type" value="Genomic_DNA"/>
</dbReference>
<dbReference type="RefSeq" id="XP_661096.1">
    <property type="nucleotide sequence ID" value="XM_656004.1"/>
</dbReference>
<dbReference type="SMR" id="Q5B7I8"/>
<dbReference type="STRING" id="227321.Q5B7I8"/>
<dbReference type="EnsemblFungi" id="CBF76044">
    <property type="protein sequence ID" value="CBF76044"/>
    <property type="gene ID" value="ANIA_03492"/>
</dbReference>
<dbReference type="KEGG" id="ani:ANIA_03492"/>
<dbReference type="HOGENOM" id="CLU_1004825_0_0_1"/>
<dbReference type="InParanoid" id="Q5B7I8"/>
<dbReference type="OMA" id="TARNFHR"/>
<dbReference type="OrthoDB" id="5366256at2759"/>
<dbReference type="Proteomes" id="UP000000560">
    <property type="component" value="Chromosome II"/>
</dbReference>
<dbReference type="GO" id="GO:0005634">
    <property type="term" value="C:nucleus"/>
    <property type="evidence" value="ECO:0007669"/>
    <property type="project" value="UniProtKB-SubCell"/>
</dbReference>
<dbReference type="GO" id="GO:0008270">
    <property type="term" value="F:zinc ion binding"/>
    <property type="evidence" value="ECO:0007669"/>
    <property type="project" value="UniProtKB-KW"/>
</dbReference>
<dbReference type="GO" id="GO:0006417">
    <property type="term" value="P:regulation of translation"/>
    <property type="evidence" value="ECO:0007669"/>
    <property type="project" value="UniProtKB-KW"/>
</dbReference>
<dbReference type="Gene3D" id="3.30.160.60">
    <property type="entry name" value="Classic Zinc Finger"/>
    <property type="match status" value="1"/>
</dbReference>
<comment type="function">
    <text evidence="3 4">C2H2-type zinc-finger transcription factor that controls the expression of the nonribosomal peptide synthases inpA and inpB, as well as of the other inp cluster-associated genes (PubMed:20952652, PubMed:27294372). Also mediates the expression of the asperfuranone biosynthesis gene cluster by binding to the afoA promoter (PubMed:20952652). Probably recognizes the 5'-CT/C/AAAAGGAT/AT/GG/CA-3' motif in the promoters of teget genes (PubMed:20952652).</text>
</comment>
<comment type="subcellular location">
    <subcellularLocation>
        <location evidence="6">Nucleus</location>
    </subcellularLocation>
</comment>
<comment type="similarity">
    <text evidence="6">Belongs to the GLI C2H2-type zinc-finger protein family.</text>
</comment>
<evidence type="ECO:0000255" key="1">
    <source>
        <dbReference type="PROSITE-ProRule" id="PRU00042"/>
    </source>
</evidence>
<evidence type="ECO:0000256" key="2">
    <source>
        <dbReference type="SAM" id="MobiDB-lite"/>
    </source>
</evidence>
<evidence type="ECO:0000269" key="3">
    <source>
    </source>
</evidence>
<evidence type="ECO:0000269" key="4">
    <source>
    </source>
</evidence>
<evidence type="ECO:0000303" key="5">
    <source>
    </source>
</evidence>
<evidence type="ECO:0000305" key="6"/>
<feature type="chain" id="PRO_0000444107" description="C2H2-type zinc-finger transcription factor">
    <location>
        <begin position="1"/>
        <end position="277"/>
    </location>
</feature>
<feature type="zinc finger region" description="C2H2-type; degenerate" evidence="1">
    <location>
        <begin position="185"/>
        <end position="208"/>
    </location>
</feature>
<feature type="region of interest" description="Disordered" evidence="2">
    <location>
        <begin position="23"/>
        <end position="66"/>
    </location>
</feature>
<feature type="region of interest" description="Disordered" evidence="2">
    <location>
        <begin position="78"/>
        <end position="146"/>
    </location>
</feature>
<feature type="compositionally biased region" description="Polar residues" evidence="2">
    <location>
        <begin position="27"/>
        <end position="37"/>
    </location>
</feature>
<proteinExistence type="inferred from homology"/>
<accession>Q5B7I8</accession>
<accession>A0A1U8QIT7</accession>
<accession>C8V549</accession>
<reference key="1">
    <citation type="journal article" date="2005" name="Nature">
        <title>Sequencing of Aspergillus nidulans and comparative analysis with A. fumigatus and A. oryzae.</title>
        <authorList>
            <person name="Galagan J.E."/>
            <person name="Calvo S.E."/>
            <person name="Cuomo C."/>
            <person name="Ma L.-J."/>
            <person name="Wortman J.R."/>
            <person name="Batzoglou S."/>
            <person name="Lee S.-I."/>
            <person name="Bastuerkmen M."/>
            <person name="Spevak C.C."/>
            <person name="Clutterbuck J."/>
            <person name="Kapitonov V."/>
            <person name="Jurka J."/>
            <person name="Scazzocchio C."/>
            <person name="Farman M.L."/>
            <person name="Butler J."/>
            <person name="Purcell S."/>
            <person name="Harris S."/>
            <person name="Braus G.H."/>
            <person name="Draht O."/>
            <person name="Busch S."/>
            <person name="D'Enfert C."/>
            <person name="Bouchier C."/>
            <person name="Goldman G.H."/>
            <person name="Bell-Pedersen D."/>
            <person name="Griffiths-Jones S."/>
            <person name="Doonan J.H."/>
            <person name="Yu J."/>
            <person name="Vienken K."/>
            <person name="Pain A."/>
            <person name="Freitag M."/>
            <person name="Selker E.U."/>
            <person name="Archer D.B."/>
            <person name="Penalva M.A."/>
            <person name="Oakley B.R."/>
            <person name="Momany M."/>
            <person name="Tanaka T."/>
            <person name="Kumagai T."/>
            <person name="Asai K."/>
            <person name="Machida M."/>
            <person name="Nierman W.C."/>
            <person name="Denning D.W."/>
            <person name="Caddick M.X."/>
            <person name="Hynes M."/>
            <person name="Paoletti M."/>
            <person name="Fischer R."/>
            <person name="Miller B.L."/>
            <person name="Dyer P.S."/>
            <person name="Sachs M.S."/>
            <person name="Osmani S.A."/>
            <person name="Birren B.W."/>
        </authorList>
    </citation>
    <scope>NUCLEOTIDE SEQUENCE [LARGE SCALE GENOMIC DNA]</scope>
    <source>
        <strain>FGSC A4 / ATCC 38163 / CBS 112.46 / NRRL 194 / M139</strain>
    </source>
</reference>
<reference key="2">
    <citation type="journal article" date="2009" name="Fungal Genet. Biol.">
        <title>The 2008 update of the Aspergillus nidulans genome annotation: a community effort.</title>
        <authorList>
            <person name="Wortman J.R."/>
            <person name="Gilsenan J.M."/>
            <person name="Joardar V."/>
            <person name="Deegan J."/>
            <person name="Clutterbuck J."/>
            <person name="Andersen M.R."/>
            <person name="Archer D."/>
            <person name="Bencina M."/>
            <person name="Braus G."/>
            <person name="Coutinho P."/>
            <person name="von Dohren H."/>
            <person name="Doonan J."/>
            <person name="Driessen A.J."/>
            <person name="Durek P."/>
            <person name="Espeso E."/>
            <person name="Fekete E."/>
            <person name="Flipphi M."/>
            <person name="Estrada C.G."/>
            <person name="Geysens S."/>
            <person name="Goldman G."/>
            <person name="de Groot P.W."/>
            <person name="Hansen K."/>
            <person name="Harris S.D."/>
            <person name="Heinekamp T."/>
            <person name="Helmstaedt K."/>
            <person name="Henrissat B."/>
            <person name="Hofmann G."/>
            <person name="Homan T."/>
            <person name="Horio T."/>
            <person name="Horiuchi H."/>
            <person name="James S."/>
            <person name="Jones M."/>
            <person name="Karaffa L."/>
            <person name="Karanyi Z."/>
            <person name="Kato M."/>
            <person name="Keller N."/>
            <person name="Kelly D.E."/>
            <person name="Kiel J.A."/>
            <person name="Kim J.M."/>
            <person name="van der Klei I.J."/>
            <person name="Klis F.M."/>
            <person name="Kovalchuk A."/>
            <person name="Krasevec N."/>
            <person name="Kubicek C.P."/>
            <person name="Liu B."/>
            <person name="Maccabe A."/>
            <person name="Meyer V."/>
            <person name="Mirabito P."/>
            <person name="Miskei M."/>
            <person name="Mos M."/>
            <person name="Mullins J."/>
            <person name="Nelson D.R."/>
            <person name="Nielsen J."/>
            <person name="Oakley B.R."/>
            <person name="Osmani S.A."/>
            <person name="Pakula T."/>
            <person name="Paszewski A."/>
            <person name="Paulsen I."/>
            <person name="Pilsyk S."/>
            <person name="Pocsi I."/>
            <person name="Punt P.J."/>
            <person name="Ram A.F."/>
            <person name="Ren Q."/>
            <person name="Robellet X."/>
            <person name="Robson G."/>
            <person name="Seiboth B."/>
            <person name="van Solingen P."/>
            <person name="Specht T."/>
            <person name="Sun J."/>
            <person name="Taheri-Talesh N."/>
            <person name="Takeshita N."/>
            <person name="Ussery D."/>
            <person name="vanKuyk P.A."/>
            <person name="Visser H."/>
            <person name="van de Vondervoort P.J."/>
            <person name="de Vries R.P."/>
            <person name="Walton J."/>
            <person name="Xiang X."/>
            <person name="Xiong Y."/>
            <person name="Zeng A.P."/>
            <person name="Brandt B.W."/>
            <person name="Cornell M.J."/>
            <person name="van den Hondel C.A."/>
            <person name="Visser J."/>
            <person name="Oliver S.G."/>
            <person name="Turner G."/>
        </authorList>
    </citation>
    <scope>GENOME REANNOTATION</scope>
    <source>
        <strain>FGSC A4 / ATCC 38163 / CBS 112.46 / NRRL 194 / M139</strain>
    </source>
</reference>
<reference key="3">
    <citation type="journal article" date="2010" name="Appl. Environ. Microbiol.">
        <title>Activation of a silent fungal polyketide biosynthesis pathway through regulatory cross talk with a cryptic nonribosomal peptide synthetase gene cluster.</title>
        <authorList>
            <person name="Bergmann S."/>
            <person name="Funk A.N."/>
            <person name="Scherlach K."/>
            <person name="Schroeckh V."/>
            <person name="Shelest E."/>
            <person name="Horn U."/>
            <person name="Hertweck C."/>
            <person name="Brakhage A.A."/>
        </authorList>
    </citation>
    <scope>FUNCTION</scope>
</reference>
<reference key="4">
    <citation type="journal article" date="2016" name="ACS Chem. Biol.">
        <title>Resistance gene-guided genome mining: serial promoter exchanges in Aspergillus nidulans reveal the biosynthetic pathway for fellutamide B, a proteasome inhibitor.</title>
        <authorList>
            <person name="Yeh H.H."/>
            <person name="Ahuja M."/>
            <person name="Chiang Y.M."/>
            <person name="Oakley C.E."/>
            <person name="Moore S."/>
            <person name="Yoon O."/>
            <person name="Hajovsky H."/>
            <person name="Bok J.W."/>
            <person name="Keller N.P."/>
            <person name="Wang C.C."/>
            <person name="Oakley B.R."/>
        </authorList>
    </citation>
    <scope>FUNCTION</scope>
</reference>